<protein>
    <recommendedName>
        <fullName>Histone H3-like 1</fullName>
    </recommendedName>
    <alternativeName>
        <fullName>Generative cell-specific histone H3</fullName>
    </alternativeName>
    <alternativeName>
        <fullName>Histone gH3</fullName>
    </alternativeName>
</protein>
<organism>
    <name type="scientific">Lilium longiflorum</name>
    <name type="common">Trumpet lily</name>
    <dbReference type="NCBI Taxonomy" id="4690"/>
    <lineage>
        <taxon>Eukaryota</taxon>
        <taxon>Viridiplantae</taxon>
        <taxon>Streptophyta</taxon>
        <taxon>Embryophyta</taxon>
        <taxon>Tracheophyta</taxon>
        <taxon>Spermatophyta</taxon>
        <taxon>Magnoliopsida</taxon>
        <taxon>Liliopsida</taxon>
        <taxon>Liliales</taxon>
        <taxon>Liliaceae</taxon>
        <taxon>Lilium</taxon>
    </lineage>
</organism>
<gene>
    <name type="primary">gH3</name>
</gene>
<keyword id="KW-0158">Chromosome</keyword>
<keyword id="KW-0238">DNA-binding</keyword>
<keyword id="KW-0544">Nucleosome core</keyword>
<keyword id="KW-0539">Nucleus</keyword>
<comment type="function">
    <text evidence="1">Core component of nucleosome. Nucleosomes wrap and compact DNA into chromatin, limiting DNA accessibility to the cellular machineries which require DNA as a template. Histones thereby play a central role in transcription regulation, DNA repair, DNA replication and chromosomal stability. DNA accessibility is regulated via a complex set of post-translational modifications of histones, also called histone code, and nucleosome remodeling (By similarity).</text>
</comment>
<comment type="subunit">
    <text>The nucleosome is a histone octamer containing two molecules each of H2A, H2B, H3 and H4 assembled in one H3-H4 heterotetramer and two H2A-H2B heterodimers. The octamer wraps approximately 147 bp of DNA.</text>
</comment>
<comment type="subcellular location">
    <subcellularLocation>
        <location>Nucleus</location>
    </subcellularLocation>
    <subcellularLocation>
        <location>Chromosome</location>
    </subcellularLocation>
    <text>Distributed throughout the chromatin.</text>
</comment>
<comment type="tissue specificity">
    <text evidence="3 4 5">Pollen specific.</text>
</comment>
<comment type="developmental stage">
    <text evidence="3 4 5">Detected only in the generative cell of late bicellular pollen and not in early bicellular pollen.</text>
</comment>
<comment type="similarity">
    <text evidence="6">Belongs to the histone H3 family.</text>
</comment>
<dbReference type="EMBL" id="AB003783">
    <property type="protein sequence ID" value="BAA96098.1"/>
    <property type="molecule type" value="mRNA"/>
</dbReference>
<dbReference type="EMBL" id="AB195646">
    <property type="protein sequence ID" value="BAE48429.1"/>
    <property type="molecule type" value="mRNA"/>
</dbReference>
<dbReference type="EMBL" id="AB195647">
    <property type="protein sequence ID" value="BAE48430.1"/>
    <property type="molecule type" value="Genomic_DNA"/>
</dbReference>
<dbReference type="SMR" id="Q9MBF6"/>
<dbReference type="GO" id="GO:0000786">
    <property type="term" value="C:nucleosome"/>
    <property type="evidence" value="ECO:0007669"/>
    <property type="project" value="UniProtKB-KW"/>
</dbReference>
<dbReference type="GO" id="GO:0005634">
    <property type="term" value="C:nucleus"/>
    <property type="evidence" value="ECO:0007669"/>
    <property type="project" value="UniProtKB-SubCell"/>
</dbReference>
<dbReference type="GO" id="GO:0003677">
    <property type="term" value="F:DNA binding"/>
    <property type="evidence" value="ECO:0007669"/>
    <property type="project" value="UniProtKB-KW"/>
</dbReference>
<dbReference type="GO" id="GO:0046982">
    <property type="term" value="F:protein heterodimerization activity"/>
    <property type="evidence" value="ECO:0007669"/>
    <property type="project" value="InterPro"/>
</dbReference>
<dbReference type="GO" id="GO:0030527">
    <property type="term" value="F:structural constituent of chromatin"/>
    <property type="evidence" value="ECO:0007669"/>
    <property type="project" value="InterPro"/>
</dbReference>
<dbReference type="CDD" id="cd22911">
    <property type="entry name" value="HFD_H3"/>
    <property type="match status" value="1"/>
</dbReference>
<dbReference type="Gene3D" id="1.10.20.10">
    <property type="entry name" value="Histone, subunit A"/>
    <property type="match status" value="1"/>
</dbReference>
<dbReference type="InterPro" id="IPR009072">
    <property type="entry name" value="Histone-fold"/>
</dbReference>
<dbReference type="InterPro" id="IPR007125">
    <property type="entry name" value="Histone_H2A/H2B/H3"/>
</dbReference>
<dbReference type="InterPro" id="IPR000164">
    <property type="entry name" value="Histone_H3/CENP-A"/>
</dbReference>
<dbReference type="PANTHER" id="PTHR45810:SF1">
    <property type="entry name" value="HISTONE H3-LIKE CENTROMERIC PROTEIN A"/>
    <property type="match status" value="1"/>
</dbReference>
<dbReference type="PANTHER" id="PTHR45810">
    <property type="entry name" value="HISTONE H3.2"/>
    <property type="match status" value="1"/>
</dbReference>
<dbReference type="Pfam" id="PF00125">
    <property type="entry name" value="Histone"/>
    <property type="match status" value="1"/>
</dbReference>
<dbReference type="SMART" id="SM00428">
    <property type="entry name" value="H3"/>
    <property type="match status" value="1"/>
</dbReference>
<dbReference type="SUPFAM" id="SSF47113">
    <property type="entry name" value="Histone-fold"/>
    <property type="match status" value="1"/>
</dbReference>
<evidence type="ECO:0000250" key="1"/>
<evidence type="ECO:0000256" key="2">
    <source>
        <dbReference type="SAM" id="MobiDB-lite"/>
    </source>
</evidence>
<evidence type="ECO:0000269" key="3">
    <source>
    </source>
</evidence>
<evidence type="ECO:0000269" key="4">
    <source>
    </source>
</evidence>
<evidence type="ECO:0000269" key="5">
    <source>
    </source>
</evidence>
<evidence type="ECO:0000305" key="6"/>
<sequence length="149" mass="17421">MARPRKEAPQRNLDRDENARQQPTEEPQDEAPRNQGRQQQQQRPPAAPRRPRRFRPGTVALREIRRIQRSNVPLIPHSPFMRLVRELAAEFLDDCRFAAETFIMLKEVVEDELVNHFGNVQICSIHAKRIIITVKDFKLAKLLKGEPED</sequence>
<feature type="initiator methionine" description="Removed" evidence="1">
    <location>
        <position position="1"/>
    </location>
</feature>
<feature type="chain" id="PRO_0000263048" description="Histone H3-like 1">
    <location>
        <begin position="2"/>
        <end position="149"/>
    </location>
</feature>
<feature type="region of interest" description="Disordered" evidence="2">
    <location>
        <begin position="1"/>
        <end position="58"/>
    </location>
</feature>
<feature type="compositionally biased region" description="Basic and acidic residues" evidence="2">
    <location>
        <begin position="1"/>
        <end position="19"/>
    </location>
</feature>
<feature type="compositionally biased region" description="Low complexity" evidence="2">
    <location>
        <begin position="33"/>
        <end position="44"/>
    </location>
</feature>
<accession>Q9MBF6</accession>
<accession>Q2Z2F7</accession>
<name>H3L1_LILLO</name>
<proteinExistence type="evidence at transcript level"/>
<reference key="1">
    <citation type="journal article" date="2000" name="Chromosoma">
        <title>Unusual core histones specifically expressed in male gametic cells of Lilium longiflorum.</title>
        <authorList>
            <person name="Ueda K."/>
            <person name="Kinoshita Y."/>
            <person name="Xu Z.-J."/>
            <person name="Ide N."/>
            <person name="Ono M."/>
            <person name="Akahori Y."/>
            <person name="Tanaka I."/>
            <person name="Inoue M."/>
        </authorList>
    </citation>
    <scope>NUCLEOTIDE SEQUENCE [MRNA]</scope>
    <scope>DEVELOPMENTAL STAGE</scope>
    <scope>TISSUE SPECIFICITY</scope>
    <source>
        <strain>cv. Georgia</strain>
    </source>
</reference>
<reference key="2">
    <citation type="journal article" date="2006" name="Plant Mol. Biol.">
        <title>Histone H3 variants in male gametic cells of lily and H3 methylation in mature pollen.</title>
        <authorList>
            <person name="Okada T."/>
            <person name="Singh M.B."/>
            <person name="Bhalla P.L."/>
        </authorList>
    </citation>
    <scope>NUCLEOTIDE SEQUENCE [GENOMIC DNA / MRNA]</scope>
    <scope>DEVELOPMENTAL STAGE</scope>
    <scope>TISSUE SPECIFICITY</scope>
    <source>
        <strain>cv. White Fox</strain>
    </source>
</reference>
<reference key="3">
    <citation type="journal article" date="2005" name="Plant Cell Physiol.">
        <title>A histone H3.3-like gene specifically expressed in the vegetative cell of developing lily pollen.</title>
        <authorList>
            <person name="Sano Y."/>
            <person name="Tanaka I."/>
        </authorList>
    </citation>
    <scope>TISSUE SPECIFICITY</scope>
    <scope>DEVELOPMENTAL STAGE</scope>
</reference>